<keyword id="KW-0687">Ribonucleoprotein</keyword>
<keyword id="KW-0689">Ribosomal protein</keyword>
<keyword id="KW-0694">RNA-binding</keyword>
<keyword id="KW-0699">rRNA-binding</keyword>
<name>RL23_LACLS</name>
<sequence>MSLYDIIRKPIITEASMAAMDQKKYTFEVDSRAHKLLIKQAVEAVFDVKVASVNTISVKPKSKRVGKYTGTKSGYKKAIVTLTEDSKKIEIFGEDAE</sequence>
<accession>Q02W26</accession>
<reference key="1">
    <citation type="journal article" date="2006" name="Proc. Natl. Acad. Sci. U.S.A.">
        <title>Comparative genomics of the lactic acid bacteria.</title>
        <authorList>
            <person name="Makarova K.S."/>
            <person name="Slesarev A."/>
            <person name="Wolf Y.I."/>
            <person name="Sorokin A."/>
            <person name="Mirkin B."/>
            <person name="Koonin E.V."/>
            <person name="Pavlov A."/>
            <person name="Pavlova N."/>
            <person name="Karamychev V."/>
            <person name="Polouchine N."/>
            <person name="Shakhova V."/>
            <person name="Grigoriev I."/>
            <person name="Lou Y."/>
            <person name="Rohksar D."/>
            <person name="Lucas S."/>
            <person name="Huang K."/>
            <person name="Goodstein D.M."/>
            <person name="Hawkins T."/>
            <person name="Plengvidhya V."/>
            <person name="Welker D."/>
            <person name="Hughes J."/>
            <person name="Goh Y."/>
            <person name="Benson A."/>
            <person name="Baldwin K."/>
            <person name="Lee J.-H."/>
            <person name="Diaz-Muniz I."/>
            <person name="Dosti B."/>
            <person name="Smeianov V."/>
            <person name="Wechter W."/>
            <person name="Barabote R."/>
            <person name="Lorca G."/>
            <person name="Altermann E."/>
            <person name="Barrangou R."/>
            <person name="Ganesan B."/>
            <person name="Xie Y."/>
            <person name="Rawsthorne H."/>
            <person name="Tamir D."/>
            <person name="Parker C."/>
            <person name="Breidt F."/>
            <person name="Broadbent J.R."/>
            <person name="Hutkins R."/>
            <person name="O'Sullivan D."/>
            <person name="Steele J."/>
            <person name="Unlu G."/>
            <person name="Saier M.H. Jr."/>
            <person name="Klaenhammer T."/>
            <person name="Richardson P."/>
            <person name="Kozyavkin S."/>
            <person name="Weimer B.C."/>
            <person name="Mills D.A."/>
        </authorList>
    </citation>
    <scope>NUCLEOTIDE SEQUENCE [LARGE SCALE GENOMIC DNA]</scope>
    <source>
        <strain>SK11</strain>
    </source>
</reference>
<gene>
    <name evidence="1" type="primary">rplW</name>
    <name type="ordered locus">LACR_2400</name>
</gene>
<protein>
    <recommendedName>
        <fullName evidence="1">Large ribosomal subunit protein uL23</fullName>
    </recommendedName>
    <alternativeName>
        <fullName evidence="2">50S ribosomal protein L23</fullName>
    </alternativeName>
</protein>
<proteinExistence type="inferred from homology"/>
<comment type="function">
    <text evidence="1">One of the early assembly proteins it binds 23S rRNA. One of the proteins that surrounds the polypeptide exit tunnel on the outside of the ribosome. Forms the main docking site for trigger factor binding to the ribosome.</text>
</comment>
<comment type="subunit">
    <text evidence="1">Part of the 50S ribosomal subunit. Contacts protein L29, and trigger factor when it is bound to the ribosome.</text>
</comment>
<comment type="similarity">
    <text evidence="1">Belongs to the universal ribosomal protein uL23 family.</text>
</comment>
<feature type="chain" id="PRO_0000272763" description="Large ribosomal subunit protein uL23">
    <location>
        <begin position="1"/>
        <end position="97"/>
    </location>
</feature>
<organism>
    <name type="scientific">Lactococcus lactis subsp. cremoris (strain SK11)</name>
    <dbReference type="NCBI Taxonomy" id="272622"/>
    <lineage>
        <taxon>Bacteria</taxon>
        <taxon>Bacillati</taxon>
        <taxon>Bacillota</taxon>
        <taxon>Bacilli</taxon>
        <taxon>Lactobacillales</taxon>
        <taxon>Streptococcaceae</taxon>
        <taxon>Lactococcus</taxon>
        <taxon>Lactococcus cremoris subsp. cremoris</taxon>
    </lineage>
</organism>
<evidence type="ECO:0000255" key="1">
    <source>
        <dbReference type="HAMAP-Rule" id="MF_01369"/>
    </source>
</evidence>
<evidence type="ECO:0000305" key="2"/>
<dbReference type="EMBL" id="CP000425">
    <property type="protein sequence ID" value="ABJ73846.1"/>
    <property type="molecule type" value="Genomic_DNA"/>
</dbReference>
<dbReference type="RefSeq" id="WP_011677161.1">
    <property type="nucleotide sequence ID" value="NC_008527.1"/>
</dbReference>
<dbReference type="SMR" id="Q02W26"/>
<dbReference type="KEGG" id="llc:LACR_2400"/>
<dbReference type="HOGENOM" id="CLU_037562_3_2_9"/>
<dbReference type="Proteomes" id="UP000000240">
    <property type="component" value="Chromosome"/>
</dbReference>
<dbReference type="GO" id="GO:1990904">
    <property type="term" value="C:ribonucleoprotein complex"/>
    <property type="evidence" value="ECO:0007669"/>
    <property type="project" value="UniProtKB-KW"/>
</dbReference>
<dbReference type="GO" id="GO:0005840">
    <property type="term" value="C:ribosome"/>
    <property type="evidence" value="ECO:0007669"/>
    <property type="project" value="UniProtKB-KW"/>
</dbReference>
<dbReference type="GO" id="GO:0019843">
    <property type="term" value="F:rRNA binding"/>
    <property type="evidence" value="ECO:0007669"/>
    <property type="project" value="UniProtKB-UniRule"/>
</dbReference>
<dbReference type="GO" id="GO:0003735">
    <property type="term" value="F:structural constituent of ribosome"/>
    <property type="evidence" value="ECO:0007669"/>
    <property type="project" value="InterPro"/>
</dbReference>
<dbReference type="GO" id="GO:0006412">
    <property type="term" value="P:translation"/>
    <property type="evidence" value="ECO:0007669"/>
    <property type="project" value="UniProtKB-UniRule"/>
</dbReference>
<dbReference type="FunFam" id="3.30.70.330:FF:000001">
    <property type="entry name" value="50S ribosomal protein L23"/>
    <property type="match status" value="1"/>
</dbReference>
<dbReference type="Gene3D" id="3.30.70.330">
    <property type="match status" value="1"/>
</dbReference>
<dbReference type="HAMAP" id="MF_01369_B">
    <property type="entry name" value="Ribosomal_uL23_B"/>
    <property type="match status" value="1"/>
</dbReference>
<dbReference type="InterPro" id="IPR012677">
    <property type="entry name" value="Nucleotide-bd_a/b_plait_sf"/>
</dbReference>
<dbReference type="InterPro" id="IPR013025">
    <property type="entry name" value="Ribosomal_uL23-like"/>
</dbReference>
<dbReference type="InterPro" id="IPR012678">
    <property type="entry name" value="Ribosomal_uL23/eL15/eS24_sf"/>
</dbReference>
<dbReference type="InterPro" id="IPR001014">
    <property type="entry name" value="Ribosomal_uL23_CS"/>
</dbReference>
<dbReference type="NCBIfam" id="NF004361">
    <property type="entry name" value="PRK05738.2-1"/>
    <property type="match status" value="1"/>
</dbReference>
<dbReference type="NCBIfam" id="NF004363">
    <property type="entry name" value="PRK05738.2-4"/>
    <property type="match status" value="1"/>
</dbReference>
<dbReference type="PANTHER" id="PTHR11620">
    <property type="entry name" value="60S RIBOSOMAL PROTEIN L23A"/>
    <property type="match status" value="1"/>
</dbReference>
<dbReference type="Pfam" id="PF00276">
    <property type="entry name" value="Ribosomal_L23"/>
    <property type="match status" value="1"/>
</dbReference>
<dbReference type="SUPFAM" id="SSF54189">
    <property type="entry name" value="Ribosomal proteins S24e, L23 and L15e"/>
    <property type="match status" value="1"/>
</dbReference>
<dbReference type="PROSITE" id="PS00050">
    <property type="entry name" value="RIBOSOMAL_L23"/>
    <property type="match status" value="1"/>
</dbReference>